<evidence type="ECO:0000255" key="1">
    <source>
        <dbReference type="HAMAP-Rule" id="MF_01379"/>
    </source>
</evidence>
<dbReference type="EC" id="1.10.3.9" evidence="1"/>
<dbReference type="EMBL" id="AP009377">
    <property type="protein sequence ID" value="BAG16670.1"/>
    <property type="molecule type" value="Genomic_DNA"/>
</dbReference>
<dbReference type="RefSeq" id="YP_001806672.1">
    <property type="nucleotide sequence ID" value="NC_010548.1"/>
</dbReference>
<dbReference type="SMR" id="B1VKF9"/>
<dbReference type="GeneID" id="6166647"/>
<dbReference type="KEGG" id="cjf:6166647"/>
<dbReference type="OrthoDB" id="1911105at2759"/>
<dbReference type="GO" id="GO:0009535">
    <property type="term" value="C:chloroplast thylakoid membrane"/>
    <property type="evidence" value="ECO:0007669"/>
    <property type="project" value="UniProtKB-SubCell"/>
</dbReference>
<dbReference type="GO" id="GO:0009523">
    <property type="term" value="C:photosystem II"/>
    <property type="evidence" value="ECO:0007669"/>
    <property type="project" value="UniProtKB-KW"/>
</dbReference>
<dbReference type="GO" id="GO:0016168">
    <property type="term" value="F:chlorophyll binding"/>
    <property type="evidence" value="ECO:0007669"/>
    <property type="project" value="UniProtKB-UniRule"/>
</dbReference>
<dbReference type="GO" id="GO:0045156">
    <property type="term" value="F:electron transporter, transferring electrons within the cyclic electron transport pathway of photosynthesis activity"/>
    <property type="evidence" value="ECO:0007669"/>
    <property type="project" value="InterPro"/>
</dbReference>
<dbReference type="GO" id="GO:0005506">
    <property type="term" value="F:iron ion binding"/>
    <property type="evidence" value="ECO:0007669"/>
    <property type="project" value="UniProtKB-UniRule"/>
</dbReference>
<dbReference type="GO" id="GO:0016682">
    <property type="term" value="F:oxidoreductase activity, acting on diphenols and related substances as donors, oxygen as acceptor"/>
    <property type="evidence" value="ECO:0007669"/>
    <property type="project" value="UniProtKB-UniRule"/>
</dbReference>
<dbReference type="GO" id="GO:0010242">
    <property type="term" value="F:oxygen evolving activity"/>
    <property type="evidence" value="ECO:0007669"/>
    <property type="project" value="UniProtKB-EC"/>
</dbReference>
<dbReference type="GO" id="GO:0009772">
    <property type="term" value="P:photosynthetic electron transport in photosystem II"/>
    <property type="evidence" value="ECO:0007669"/>
    <property type="project" value="InterPro"/>
</dbReference>
<dbReference type="GO" id="GO:0009635">
    <property type="term" value="P:response to herbicide"/>
    <property type="evidence" value="ECO:0007669"/>
    <property type="project" value="UniProtKB-KW"/>
</dbReference>
<dbReference type="CDD" id="cd09289">
    <property type="entry name" value="Photosystem-II_D1"/>
    <property type="match status" value="1"/>
</dbReference>
<dbReference type="FunFam" id="1.20.85.10:FF:000002">
    <property type="entry name" value="Photosystem II protein D1"/>
    <property type="match status" value="1"/>
</dbReference>
<dbReference type="Gene3D" id="1.20.85.10">
    <property type="entry name" value="Photosystem II protein D1-like"/>
    <property type="match status" value="1"/>
</dbReference>
<dbReference type="HAMAP" id="MF_01379">
    <property type="entry name" value="PSII_PsbA_D1"/>
    <property type="match status" value="1"/>
</dbReference>
<dbReference type="InterPro" id="IPR055266">
    <property type="entry name" value="D1/D2"/>
</dbReference>
<dbReference type="InterPro" id="IPR036854">
    <property type="entry name" value="Photo_II_D1/D2_sf"/>
</dbReference>
<dbReference type="InterPro" id="IPR000484">
    <property type="entry name" value="Photo_RC_L/M"/>
</dbReference>
<dbReference type="InterPro" id="IPR055265">
    <property type="entry name" value="Photo_RC_L/M_CS"/>
</dbReference>
<dbReference type="InterPro" id="IPR005867">
    <property type="entry name" value="PSII_D1"/>
</dbReference>
<dbReference type="NCBIfam" id="TIGR01151">
    <property type="entry name" value="psbA"/>
    <property type="match status" value="1"/>
</dbReference>
<dbReference type="PANTHER" id="PTHR33149:SF12">
    <property type="entry name" value="PHOTOSYSTEM II D2 PROTEIN"/>
    <property type="match status" value="1"/>
</dbReference>
<dbReference type="PANTHER" id="PTHR33149">
    <property type="entry name" value="PHOTOSYSTEM II PROTEIN D1"/>
    <property type="match status" value="1"/>
</dbReference>
<dbReference type="Pfam" id="PF00124">
    <property type="entry name" value="Photo_RC"/>
    <property type="match status" value="1"/>
</dbReference>
<dbReference type="PRINTS" id="PR00256">
    <property type="entry name" value="REACTNCENTRE"/>
</dbReference>
<dbReference type="SUPFAM" id="SSF81483">
    <property type="entry name" value="Bacterial photosystem II reaction centre, L and M subunits"/>
    <property type="match status" value="1"/>
</dbReference>
<dbReference type="PROSITE" id="PS00244">
    <property type="entry name" value="REACTION_CENTER"/>
    <property type="match status" value="1"/>
</dbReference>
<proteinExistence type="inferred from homology"/>
<feature type="initiator methionine" description="Removed" evidence="1">
    <location>
        <position position="1"/>
    </location>
</feature>
<feature type="chain" id="PRO_0000339978" description="Photosystem II protein D1" evidence="1">
    <location>
        <begin position="2"/>
        <end position="344"/>
    </location>
</feature>
<feature type="propeptide" id="PRO_0000339979" evidence="1">
    <location>
        <begin position="345"/>
        <end position="353"/>
    </location>
</feature>
<feature type="transmembrane region" description="Helical" evidence="1">
    <location>
        <begin position="29"/>
        <end position="46"/>
    </location>
</feature>
<feature type="transmembrane region" description="Helical" evidence="1">
    <location>
        <begin position="118"/>
        <end position="133"/>
    </location>
</feature>
<feature type="transmembrane region" description="Helical" evidence="1">
    <location>
        <begin position="142"/>
        <end position="156"/>
    </location>
</feature>
<feature type="transmembrane region" description="Helical" evidence="1">
    <location>
        <begin position="197"/>
        <end position="218"/>
    </location>
</feature>
<feature type="transmembrane region" description="Helical" evidence="1">
    <location>
        <begin position="274"/>
        <end position="288"/>
    </location>
</feature>
<feature type="binding site" description="axial binding residue" evidence="1">
    <location>
        <position position="118"/>
    </location>
    <ligand>
        <name>chlorophyll a</name>
        <dbReference type="ChEBI" id="CHEBI:58416"/>
        <label>ChlzD1</label>
    </ligand>
    <ligandPart>
        <name>Mg</name>
        <dbReference type="ChEBI" id="CHEBI:25107"/>
    </ligandPart>
</feature>
<feature type="binding site" evidence="1">
    <location>
        <position position="126"/>
    </location>
    <ligand>
        <name>pheophytin a</name>
        <dbReference type="ChEBI" id="CHEBI:136840"/>
        <label>D1</label>
    </ligand>
</feature>
<feature type="binding site" evidence="1">
    <location>
        <position position="170"/>
    </location>
    <ligand>
        <name>[CaMn4O5] cluster</name>
        <dbReference type="ChEBI" id="CHEBI:189552"/>
    </ligand>
</feature>
<feature type="binding site" evidence="1">
    <location>
        <position position="189"/>
    </location>
    <ligand>
        <name>[CaMn4O5] cluster</name>
        <dbReference type="ChEBI" id="CHEBI:189552"/>
    </ligand>
</feature>
<feature type="binding site" description="axial binding residue" evidence="1">
    <location>
        <position position="198"/>
    </location>
    <ligand>
        <name>chlorophyll a</name>
        <dbReference type="ChEBI" id="CHEBI:58416"/>
        <label>PD1</label>
    </ligand>
    <ligandPart>
        <name>Mg</name>
        <dbReference type="ChEBI" id="CHEBI:25107"/>
    </ligandPart>
</feature>
<feature type="binding site" evidence="1">
    <location>
        <position position="215"/>
    </location>
    <ligand>
        <name>a quinone</name>
        <dbReference type="ChEBI" id="CHEBI:132124"/>
        <label>B</label>
    </ligand>
</feature>
<feature type="binding site" evidence="1">
    <location>
        <position position="215"/>
    </location>
    <ligand>
        <name>Fe cation</name>
        <dbReference type="ChEBI" id="CHEBI:24875"/>
        <note>ligand shared with heterodimeric partner</note>
    </ligand>
</feature>
<feature type="binding site" evidence="1">
    <location>
        <begin position="264"/>
        <end position="265"/>
    </location>
    <ligand>
        <name>a quinone</name>
        <dbReference type="ChEBI" id="CHEBI:132124"/>
        <label>B</label>
    </ligand>
</feature>
<feature type="binding site" evidence="1">
    <location>
        <position position="272"/>
    </location>
    <ligand>
        <name>Fe cation</name>
        <dbReference type="ChEBI" id="CHEBI:24875"/>
        <note>ligand shared with heterodimeric partner</note>
    </ligand>
</feature>
<feature type="binding site" evidence="1">
    <location>
        <position position="332"/>
    </location>
    <ligand>
        <name>[CaMn4O5] cluster</name>
        <dbReference type="ChEBI" id="CHEBI:189552"/>
    </ligand>
</feature>
<feature type="binding site" evidence="1">
    <location>
        <position position="333"/>
    </location>
    <ligand>
        <name>[CaMn4O5] cluster</name>
        <dbReference type="ChEBI" id="CHEBI:189552"/>
    </ligand>
</feature>
<feature type="binding site" evidence="1">
    <location>
        <position position="342"/>
    </location>
    <ligand>
        <name>[CaMn4O5] cluster</name>
        <dbReference type="ChEBI" id="CHEBI:189552"/>
    </ligand>
</feature>
<feature type="binding site" evidence="1">
    <location>
        <position position="344"/>
    </location>
    <ligand>
        <name>[CaMn4O5] cluster</name>
        <dbReference type="ChEBI" id="CHEBI:189552"/>
    </ligand>
</feature>
<feature type="site" description="Tyrosine radical intermediate" evidence="1">
    <location>
        <position position="161"/>
    </location>
</feature>
<feature type="site" description="Stabilizes free radical intermediate" evidence="1">
    <location>
        <position position="190"/>
    </location>
</feature>
<feature type="site" description="Cleavage; by CTPA" evidence="1">
    <location>
        <begin position="344"/>
        <end position="345"/>
    </location>
</feature>
<feature type="modified residue" description="N-acetylthreonine" evidence="1">
    <location>
        <position position="2"/>
    </location>
</feature>
<feature type="modified residue" description="Phosphothreonine" evidence="1">
    <location>
        <position position="2"/>
    </location>
</feature>
<gene>
    <name evidence="1" type="primary">psbA</name>
</gene>
<keyword id="KW-0007">Acetylation</keyword>
<keyword id="KW-0106">Calcium</keyword>
<keyword id="KW-0148">Chlorophyll</keyword>
<keyword id="KW-0150">Chloroplast</keyword>
<keyword id="KW-0157">Chromophore</keyword>
<keyword id="KW-0249">Electron transport</keyword>
<keyword id="KW-0359">Herbicide resistance</keyword>
<keyword id="KW-0408">Iron</keyword>
<keyword id="KW-0460">Magnesium</keyword>
<keyword id="KW-0464">Manganese</keyword>
<keyword id="KW-0472">Membrane</keyword>
<keyword id="KW-0479">Metal-binding</keyword>
<keyword id="KW-0560">Oxidoreductase</keyword>
<keyword id="KW-0597">Phosphoprotein</keyword>
<keyword id="KW-0602">Photosynthesis</keyword>
<keyword id="KW-0604">Photosystem II</keyword>
<keyword id="KW-0934">Plastid</keyword>
<keyword id="KW-0793">Thylakoid</keyword>
<keyword id="KW-0812">Transmembrane</keyword>
<keyword id="KW-1133">Transmembrane helix</keyword>
<keyword id="KW-0813">Transport</keyword>
<comment type="function">
    <text evidence="1">Photosystem II (PSII) is a light-driven water:plastoquinone oxidoreductase that uses light energy to abstract electrons from H(2)O, generating O(2) and a proton gradient subsequently used for ATP formation. It consists of a core antenna complex that captures photons, and an electron transfer chain that converts photonic excitation into a charge separation. The D1/D2 (PsbA/PsbD) reaction center heterodimer binds P680, the primary electron donor of PSII as well as several subsequent electron acceptors.</text>
</comment>
<comment type="catalytic activity">
    <reaction evidence="1">
        <text>2 a plastoquinone + 4 hnu + 2 H2O = 2 a plastoquinol + O2</text>
        <dbReference type="Rhea" id="RHEA:36359"/>
        <dbReference type="Rhea" id="RHEA-COMP:9561"/>
        <dbReference type="Rhea" id="RHEA-COMP:9562"/>
        <dbReference type="ChEBI" id="CHEBI:15377"/>
        <dbReference type="ChEBI" id="CHEBI:15379"/>
        <dbReference type="ChEBI" id="CHEBI:17757"/>
        <dbReference type="ChEBI" id="CHEBI:30212"/>
        <dbReference type="ChEBI" id="CHEBI:62192"/>
        <dbReference type="EC" id="1.10.3.9"/>
    </reaction>
</comment>
<comment type="cofactor">
    <text evidence="1">The D1/D2 heterodimer binds P680, chlorophylls that are the primary electron donor of PSII, and subsequent electron acceptors. It shares a non-heme iron and each subunit binds pheophytin, quinone, additional chlorophylls, carotenoids and lipids. D1 provides most of the ligands for the Mn4-Ca-O5 cluster of the oxygen-evolving complex (OEC). There is also a Cl(-1) ion associated with D1 and D2, which is required for oxygen evolution. The PSII complex binds additional chlorophylls, carotenoids and specific lipids.</text>
</comment>
<comment type="subunit">
    <text evidence="1">PSII is composed of 1 copy each of membrane proteins PsbA, PsbB, PsbC, PsbD, PsbE, PsbF, PsbH, PsbI, PsbJ, PsbK, PsbL, PsbM, PsbT, PsbX, PsbY, PsbZ, Psb30/Ycf12, at least 3 peripheral proteins of the oxygen-evolving complex and a large number of cofactors. It forms dimeric complexes.</text>
</comment>
<comment type="subcellular location">
    <subcellularLocation>
        <location evidence="1">Plastid</location>
        <location evidence="1">Chloroplast thylakoid membrane</location>
        <topology evidence="1">Multi-pass membrane protein</topology>
    </subcellularLocation>
</comment>
<comment type="PTM">
    <text evidence="1">Tyr-161 forms a radical intermediate that is referred to as redox-active TyrZ, YZ or Y-Z.</text>
</comment>
<comment type="PTM">
    <text evidence="1">C-terminally processed by CTPA; processing is essential to allow assembly of the oxygen-evolving complex and thus photosynthetic growth.</text>
</comment>
<comment type="miscellaneous">
    <text evidence="1">2 of the reaction center chlorophylls (ChlD1 and ChlD2) are entirely coordinated by water.</text>
</comment>
<comment type="miscellaneous">
    <text evidence="1">Herbicides such as atrazine, BNT, diuron or ioxynil bind in the Q(B) binding site and block subsequent electron transfer.</text>
</comment>
<comment type="similarity">
    <text evidence="1">Belongs to the reaction center PufL/M/PsbA/D family.</text>
</comment>
<geneLocation type="chloroplast"/>
<reference key="1">
    <citation type="journal article" date="2008" name="BMC Plant Biol.">
        <title>Complete nucleotide sequence of the Cryptomeria japonica D. Don. chloroplast genome and comparative chloroplast genomics: diversified genomic structure of coniferous species.</title>
        <authorList>
            <person name="Hirao T."/>
            <person name="Watanabe A."/>
            <person name="Kurita M."/>
            <person name="Kondo T."/>
            <person name="Takata K."/>
        </authorList>
    </citation>
    <scope>NUCLEOTIDE SEQUENCE [LARGE SCALE GENOMIC DNA]</scope>
</reference>
<sequence>MTAILERRESASLWNRFCDWITSTENRLYIGWFGVLMIPTLLTATSVFIIAFIAAPPVDIDGIREPVSGSLLYGNNIISGAIIPTSAAIGLHFYPIWEAASVDEWLYNGGPYELIVLHFLLGVACYMGREWELSFRLGMRPWIAVAYSAPVAAATAVFLIYPIGQGSFSDGMPLGISGTFNFMIVFQAEHNILMHPFHMLGVAGVFGGSLFSAMHGSLVTSSLIRETTENESANAGYKFGQEEETYNIVAAHGYFGRLIFQYASFNNSRSLHFFLAAWPVVGIWFTALGISTMAFNLNGFNFNQSVVDSQGRVINTWADIINRANLGMEVMHERNAHNFPLDLAAVEANSIDG</sequence>
<protein>
    <recommendedName>
        <fullName evidence="1">Photosystem II protein D1</fullName>
        <shortName evidence="1">PSII D1 protein</shortName>
        <ecNumber evidence="1">1.10.3.9</ecNumber>
    </recommendedName>
    <alternativeName>
        <fullName evidence="1">Photosystem II Q(B) protein</fullName>
    </alternativeName>
</protein>
<accession>B1VKF9</accession>
<name>PSBA_CRYJA</name>
<organism>
    <name type="scientific">Cryptomeria japonica</name>
    <name type="common">Japanese cedar</name>
    <name type="synonym">Cupressus japonica</name>
    <dbReference type="NCBI Taxonomy" id="3369"/>
    <lineage>
        <taxon>Eukaryota</taxon>
        <taxon>Viridiplantae</taxon>
        <taxon>Streptophyta</taxon>
        <taxon>Embryophyta</taxon>
        <taxon>Tracheophyta</taxon>
        <taxon>Spermatophyta</taxon>
        <taxon>Pinopsida</taxon>
        <taxon>Pinidae</taxon>
        <taxon>Conifers II</taxon>
        <taxon>Cupressales</taxon>
        <taxon>Cupressaceae</taxon>
        <taxon>Cryptomeria</taxon>
    </lineage>
</organism>